<gene>
    <name evidence="1" type="primary">argG</name>
    <name type="ordered locus">Mlut_14340</name>
</gene>
<sequence>MKERIILAYSGGLDTSVAIGWIAEATGAEVVAVAVDVGQGGESLETIRQRALDCGAVEAYVADARDEFAEQYCMPTLKANALYMDAYPLVSAISRPVISRHLVAAARQFGASTVAHGCTGKGNDQVRFEVSIQTLGPDLKCIAPVRDLALTREKAIEYAERNDLPIVTTKKNPFSIDQNVWGRAVETGFLEDIWNGPTKDVYDYTDDPAFPPAPDVVTIAFERGVPTALDGRALSPLEIIEELNRRAGAQGVGRIDIVEDRLVGIKSREIYEAPGAMALIAAHRELENVTLEREQARFKKHVDQRWTELVYDGQWYSPLKRNLDTFIDATQEHVNGEIRLELHGGRATVQGRRSETGLYDFNLATYDEGDSFDQSSARGFIDIFGLSAKTASEREQRLRGSADLQDVARLSND</sequence>
<dbReference type="EC" id="6.3.4.5" evidence="1"/>
<dbReference type="EMBL" id="CP001628">
    <property type="protein sequence ID" value="ACS30929.1"/>
    <property type="molecule type" value="Genomic_DNA"/>
</dbReference>
<dbReference type="RefSeq" id="WP_012750942.1">
    <property type="nucleotide sequence ID" value="NC_012803.1"/>
</dbReference>
<dbReference type="SMR" id="C5CAM5"/>
<dbReference type="STRING" id="465515.Mlut_14340"/>
<dbReference type="EnsemblBacteria" id="ACS30929">
    <property type="protein sequence ID" value="ACS30929"/>
    <property type="gene ID" value="Mlut_14340"/>
</dbReference>
<dbReference type="GeneID" id="93343311"/>
<dbReference type="KEGG" id="mlu:Mlut_14340"/>
<dbReference type="PATRIC" id="fig|465515.4.peg.1370"/>
<dbReference type="eggNOG" id="COG0137">
    <property type="taxonomic scope" value="Bacteria"/>
</dbReference>
<dbReference type="HOGENOM" id="CLU_032784_4_2_11"/>
<dbReference type="UniPathway" id="UPA00068">
    <property type="reaction ID" value="UER00113"/>
</dbReference>
<dbReference type="Proteomes" id="UP000000738">
    <property type="component" value="Chromosome"/>
</dbReference>
<dbReference type="GO" id="GO:0005737">
    <property type="term" value="C:cytoplasm"/>
    <property type="evidence" value="ECO:0007669"/>
    <property type="project" value="UniProtKB-SubCell"/>
</dbReference>
<dbReference type="GO" id="GO:0004055">
    <property type="term" value="F:argininosuccinate synthase activity"/>
    <property type="evidence" value="ECO:0007669"/>
    <property type="project" value="UniProtKB-UniRule"/>
</dbReference>
<dbReference type="GO" id="GO:0005524">
    <property type="term" value="F:ATP binding"/>
    <property type="evidence" value="ECO:0007669"/>
    <property type="project" value="UniProtKB-UniRule"/>
</dbReference>
<dbReference type="GO" id="GO:0000053">
    <property type="term" value="P:argininosuccinate metabolic process"/>
    <property type="evidence" value="ECO:0007669"/>
    <property type="project" value="TreeGrafter"/>
</dbReference>
<dbReference type="GO" id="GO:0006526">
    <property type="term" value="P:L-arginine biosynthetic process"/>
    <property type="evidence" value="ECO:0007669"/>
    <property type="project" value="UniProtKB-UniRule"/>
</dbReference>
<dbReference type="GO" id="GO:0000050">
    <property type="term" value="P:urea cycle"/>
    <property type="evidence" value="ECO:0007669"/>
    <property type="project" value="TreeGrafter"/>
</dbReference>
<dbReference type="CDD" id="cd01999">
    <property type="entry name" value="ASS"/>
    <property type="match status" value="1"/>
</dbReference>
<dbReference type="FunFam" id="3.40.50.620:FF:000038">
    <property type="entry name" value="Argininosuccinate synthase"/>
    <property type="match status" value="1"/>
</dbReference>
<dbReference type="FunFam" id="3.90.1260.10:FF:000007">
    <property type="entry name" value="Argininosuccinate synthase"/>
    <property type="match status" value="1"/>
</dbReference>
<dbReference type="Gene3D" id="3.90.1260.10">
    <property type="entry name" value="Argininosuccinate synthetase, chain A, domain 2"/>
    <property type="match status" value="1"/>
</dbReference>
<dbReference type="Gene3D" id="3.40.50.620">
    <property type="entry name" value="HUPs"/>
    <property type="match status" value="1"/>
</dbReference>
<dbReference type="Gene3D" id="1.20.5.470">
    <property type="entry name" value="Single helix bin"/>
    <property type="match status" value="1"/>
</dbReference>
<dbReference type="HAMAP" id="MF_00005">
    <property type="entry name" value="Arg_succ_synth_type1"/>
    <property type="match status" value="1"/>
</dbReference>
<dbReference type="InterPro" id="IPR048268">
    <property type="entry name" value="Arginosuc_syn_C"/>
</dbReference>
<dbReference type="InterPro" id="IPR048267">
    <property type="entry name" value="Arginosuc_syn_N"/>
</dbReference>
<dbReference type="InterPro" id="IPR001518">
    <property type="entry name" value="Arginosuc_synth"/>
</dbReference>
<dbReference type="InterPro" id="IPR018223">
    <property type="entry name" value="Arginosuc_synth_CS"/>
</dbReference>
<dbReference type="InterPro" id="IPR023434">
    <property type="entry name" value="Arginosuc_synth_type_1_subfam"/>
</dbReference>
<dbReference type="InterPro" id="IPR024074">
    <property type="entry name" value="AS_cat/multimer_dom_body"/>
</dbReference>
<dbReference type="InterPro" id="IPR014729">
    <property type="entry name" value="Rossmann-like_a/b/a_fold"/>
</dbReference>
<dbReference type="NCBIfam" id="TIGR00032">
    <property type="entry name" value="argG"/>
    <property type="match status" value="1"/>
</dbReference>
<dbReference type="NCBIfam" id="NF001770">
    <property type="entry name" value="PRK00509.1"/>
    <property type="match status" value="1"/>
</dbReference>
<dbReference type="PANTHER" id="PTHR11587">
    <property type="entry name" value="ARGININOSUCCINATE SYNTHASE"/>
    <property type="match status" value="1"/>
</dbReference>
<dbReference type="PANTHER" id="PTHR11587:SF2">
    <property type="entry name" value="ARGININOSUCCINATE SYNTHASE"/>
    <property type="match status" value="1"/>
</dbReference>
<dbReference type="Pfam" id="PF20979">
    <property type="entry name" value="Arginosuc_syn_C"/>
    <property type="match status" value="1"/>
</dbReference>
<dbReference type="Pfam" id="PF00764">
    <property type="entry name" value="Arginosuc_synth"/>
    <property type="match status" value="1"/>
</dbReference>
<dbReference type="SUPFAM" id="SSF52402">
    <property type="entry name" value="Adenine nucleotide alpha hydrolases-like"/>
    <property type="match status" value="1"/>
</dbReference>
<dbReference type="SUPFAM" id="SSF69864">
    <property type="entry name" value="Argininosuccinate synthetase, C-terminal domain"/>
    <property type="match status" value="1"/>
</dbReference>
<dbReference type="PROSITE" id="PS00564">
    <property type="entry name" value="ARGININOSUCCIN_SYN_1"/>
    <property type="match status" value="1"/>
</dbReference>
<dbReference type="PROSITE" id="PS00565">
    <property type="entry name" value="ARGININOSUCCIN_SYN_2"/>
    <property type="match status" value="1"/>
</dbReference>
<organism>
    <name type="scientific">Micrococcus luteus (strain ATCC 4698 / DSM 20030 / JCM 1464 / CCM 169 / CCUG 5858 / IAM 1056 / NBRC 3333 / NCIMB 9278 / NCTC 2665 / VKM Ac-2230)</name>
    <name type="common">Micrococcus lysodeikticus</name>
    <dbReference type="NCBI Taxonomy" id="465515"/>
    <lineage>
        <taxon>Bacteria</taxon>
        <taxon>Bacillati</taxon>
        <taxon>Actinomycetota</taxon>
        <taxon>Actinomycetes</taxon>
        <taxon>Micrococcales</taxon>
        <taxon>Micrococcaceae</taxon>
        <taxon>Micrococcus</taxon>
    </lineage>
</organism>
<keyword id="KW-0028">Amino-acid biosynthesis</keyword>
<keyword id="KW-0055">Arginine biosynthesis</keyword>
<keyword id="KW-0067">ATP-binding</keyword>
<keyword id="KW-0963">Cytoplasm</keyword>
<keyword id="KW-0436">Ligase</keyword>
<keyword id="KW-0547">Nucleotide-binding</keyword>
<keyword id="KW-1185">Reference proteome</keyword>
<comment type="catalytic activity">
    <reaction evidence="1">
        <text>L-citrulline + L-aspartate + ATP = 2-(N(omega)-L-arginino)succinate + AMP + diphosphate + H(+)</text>
        <dbReference type="Rhea" id="RHEA:10932"/>
        <dbReference type="ChEBI" id="CHEBI:15378"/>
        <dbReference type="ChEBI" id="CHEBI:29991"/>
        <dbReference type="ChEBI" id="CHEBI:30616"/>
        <dbReference type="ChEBI" id="CHEBI:33019"/>
        <dbReference type="ChEBI" id="CHEBI:57472"/>
        <dbReference type="ChEBI" id="CHEBI:57743"/>
        <dbReference type="ChEBI" id="CHEBI:456215"/>
        <dbReference type="EC" id="6.3.4.5"/>
    </reaction>
</comment>
<comment type="pathway">
    <text evidence="1">Amino-acid biosynthesis; L-arginine biosynthesis; L-arginine from L-ornithine and carbamoyl phosphate: step 2/3.</text>
</comment>
<comment type="subunit">
    <text evidence="1">Homotetramer.</text>
</comment>
<comment type="subcellular location">
    <subcellularLocation>
        <location evidence="1">Cytoplasm</location>
    </subcellularLocation>
</comment>
<comment type="similarity">
    <text evidence="1">Belongs to the argininosuccinate synthase family. Type 1 subfamily.</text>
</comment>
<name>ASSY_MICLC</name>
<evidence type="ECO:0000255" key="1">
    <source>
        <dbReference type="HAMAP-Rule" id="MF_00005"/>
    </source>
</evidence>
<protein>
    <recommendedName>
        <fullName evidence="1">Argininosuccinate synthase</fullName>
        <ecNumber evidence="1">6.3.4.5</ecNumber>
    </recommendedName>
    <alternativeName>
        <fullName evidence="1">Citrulline--aspartate ligase</fullName>
    </alternativeName>
</protein>
<feature type="chain" id="PRO_1000201687" description="Argininosuccinate synthase">
    <location>
        <begin position="1"/>
        <end position="413"/>
    </location>
</feature>
<feature type="binding site" evidence="1">
    <location>
        <begin position="8"/>
        <end position="16"/>
    </location>
    <ligand>
        <name>ATP</name>
        <dbReference type="ChEBI" id="CHEBI:30616"/>
    </ligand>
</feature>
<feature type="binding site" evidence="1">
    <location>
        <position position="87"/>
    </location>
    <ligand>
        <name>L-citrulline</name>
        <dbReference type="ChEBI" id="CHEBI:57743"/>
    </ligand>
</feature>
<feature type="binding site" evidence="1">
    <location>
        <position position="117"/>
    </location>
    <ligand>
        <name>ATP</name>
        <dbReference type="ChEBI" id="CHEBI:30616"/>
    </ligand>
</feature>
<feature type="binding site" evidence="1">
    <location>
        <position position="119"/>
    </location>
    <ligand>
        <name>L-aspartate</name>
        <dbReference type="ChEBI" id="CHEBI:29991"/>
    </ligand>
</feature>
<feature type="binding site" evidence="1">
    <location>
        <position position="123"/>
    </location>
    <ligand>
        <name>L-aspartate</name>
        <dbReference type="ChEBI" id="CHEBI:29991"/>
    </ligand>
</feature>
<feature type="binding site" evidence="1">
    <location>
        <position position="123"/>
    </location>
    <ligand>
        <name>L-citrulline</name>
        <dbReference type="ChEBI" id="CHEBI:57743"/>
    </ligand>
</feature>
<feature type="binding site" evidence="1">
    <location>
        <position position="124"/>
    </location>
    <ligand>
        <name>L-aspartate</name>
        <dbReference type="ChEBI" id="CHEBI:29991"/>
    </ligand>
</feature>
<feature type="binding site" evidence="1">
    <location>
        <position position="127"/>
    </location>
    <ligand>
        <name>L-citrulline</name>
        <dbReference type="ChEBI" id="CHEBI:57743"/>
    </ligand>
</feature>
<feature type="binding site" evidence="1">
    <location>
        <position position="175"/>
    </location>
    <ligand>
        <name>L-citrulline</name>
        <dbReference type="ChEBI" id="CHEBI:57743"/>
    </ligand>
</feature>
<feature type="binding site" evidence="1">
    <location>
        <position position="259"/>
    </location>
    <ligand>
        <name>L-citrulline</name>
        <dbReference type="ChEBI" id="CHEBI:57743"/>
    </ligand>
</feature>
<feature type="binding site" evidence="1">
    <location>
        <position position="271"/>
    </location>
    <ligand>
        <name>L-citrulline</name>
        <dbReference type="ChEBI" id="CHEBI:57743"/>
    </ligand>
</feature>
<reference key="1">
    <citation type="journal article" date="2010" name="J. Bacteriol.">
        <title>Genome sequence of the Fleming strain of Micrococcus luteus, a simple free-living actinobacterium.</title>
        <authorList>
            <person name="Young M."/>
            <person name="Artsatbanov V."/>
            <person name="Beller H.R."/>
            <person name="Chandra G."/>
            <person name="Chater K.F."/>
            <person name="Dover L.G."/>
            <person name="Goh E.B."/>
            <person name="Kahan T."/>
            <person name="Kaprelyants A.S."/>
            <person name="Kyrpides N."/>
            <person name="Lapidus A."/>
            <person name="Lowry S.R."/>
            <person name="Lykidis A."/>
            <person name="Mahillon J."/>
            <person name="Markowitz V."/>
            <person name="Mavromatis K."/>
            <person name="Mukamolova G.V."/>
            <person name="Oren A."/>
            <person name="Rokem J.S."/>
            <person name="Smith M.C."/>
            <person name="Young D.I."/>
            <person name="Greenblatt C.L."/>
        </authorList>
    </citation>
    <scope>NUCLEOTIDE SEQUENCE [LARGE SCALE GENOMIC DNA]</scope>
    <source>
        <strain>ATCC 4698 / DSM 20030 / JCM 1464 / CCM 169 / CCUG 5858 / IAM 1056 / NBRC 3333 / NCIMB 9278 / NCTC 2665 / VKM Ac-2230</strain>
    </source>
</reference>
<proteinExistence type="inferred from homology"/>
<accession>C5CAM5</accession>